<dbReference type="GO" id="GO:0005576">
    <property type="term" value="C:extracellular region"/>
    <property type="evidence" value="ECO:0007669"/>
    <property type="project" value="UniProtKB-KW"/>
</dbReference>
<proteinExistence type="evidence at protein level"/>
<name>CWP28_ARATH</name>
<evidence type="ECO:0000269" key="1">
    <source>
    </source>
</evidence>
<evidence type="ECO:0000303" key="2">
    <source>
    </source>
</evidence>
<evidence type="ECO:0000305" key="3"/>
<organism>
    <name type="scientific">Arabidopsis thaliana</name>
    <name type="common">Mouse-ear cress</name>
    <dbReference type="NCBI Taxonomy" id="3702"/>
    <lineage>
        <taxon>Eukaryota</taxon>
        <taxon>Viridiplantae</taxon>
        <taxon>Streptophyta</taxon>
        <taxon>Embryophyta</taxon>
        <taxon>Tracheophyta</taxon>
        <taxon>Spermatophyta</taxon>
        <taxon>Magnoliopsida</taxon>
        <taxon>eudicotyledons</taxon>
        <taxon>Gunneridae</taxon>
        <taxon>Pentapetalae</taxon>
        <taxon>rosids</taxon>
        <taxon>malvids</taxon>
        <taxon>Brassicales</taxon>
        <taxon>Brassicaceae</taxon>
        <taxon>Camelineae</taxon>
        <taxon>Arabidopsis</taxon>
    </lineage>
</organism>
<protein>
    <recommendedName>
        <fullName>48 kDa cell wall protein</fullName>
    </recommendedName>
</protein>
<sequence>DNPSSTPPLR</sequence>
<keyword id="KW-0134">Cell wall</keyword>
<keyword id="KW-0903">Direct protein sequencing</keyword>
<keyword id="KW-0964">Secreted</keyword>
<accession>P80848</accession>
<comment type="subcellular location">
    <subcellularLocation>
        <location evidence="1">Secreted</location>
        <location evidence="1">Cell wall</location>
    </subcellularLocation>
</comment>
<feature type="chain" id="PRO_0000079711" description="48 kDa cell wall protein">
    <location>
        <begin position="1"/>
        <end position="10" status="greater than"/>
    </location>
</feature>
<feature type="non-terminal residue" evidence="2">
    <location>
        <position position="10"/>
    </location>
</feature>
<reference evidence="3" key="1">
    <citation type="journal article" date="1997" name="J. Biol. Chem.">
        <title>Differential extraction and protein sequencing reveals major differences in patterns of primary cell wall proteins from plants.</title>
        <authorList>
            <person name="Robertson D."/>
            <person name="Mitchell G.P."/>
            <person name="Gilroy J.S."/>
            <person name="Gerrish C."/>
            <person name="Bolwell G.P."/>
            <person name="Slabas A.R."/>
        </authorList>
    </citation>
    <scope>PROTEIN SEQUENCE</scope>
    <scope>SUBCELLULAR LOCATION</scope>
    <source>
        <strain>cv. Landsberg erecta</strain>
    </source>
</reference>